<comment type="function">
    <text evidence="1">Catalyzes the reversible isomerization-deamination of glucosamine 6-phosphate (GlcN6P) to form fructose 6-phosphate (Fru6P) and ammonium ion.</text>
</comment>
<comment type="catalytic activity">
    <reaction evidence="1">
        <text>alpha-D-glucosamine 6-phosphate + H2O = beta-D-fructose 6-phosphate + NH4(+)</text>
        <dbReference type="Rhea" id="RHEA:12172"/>
        <dbReference type="ChEBI" id="CHEBI:15377"/>
        <dbReference type="ChEBI" id="CHEBI:28938"/>
        <dbReference type="ChEBI" id="CHEBI:57634"/>
        <dbReference type="ChEBI" id="CHEBI:75989"/>
        <dbReference type="EC" id="3.5.99.6"/>
    </reaction>
</comment>
<comment type="pathway">
    <text evidence="1">Amino-sugar metabolism; N-acetylneuraminate degradation; D-fructose 6-phosphate from N-acetylneuraminate: step 5/5.</text>
</comment>
<comment type="similarity">
    <text evidence="1">Belongs to the glucosamine/galactosamine-6-phosphate isomerase family. NagB subfamily.</text>
</comment>
<keyword id="KW-0119">Carbohydrate metabolism</keyword>
<keyword id="KW-0378">Hydrolase</keyword>
<sequence length="234" mass="25764">MKIIRVQDQIEGGKIAFTLLKDSLAKGAKTLGLATGSSPISFYQEMVKSPLDFSDLTSINLDEYVGLSVESDQSYDYFMRQNLFNGKPFKKNYLPNGLATDVEAEAKRYDQIIAEHPIDFQVLGIGRNGHIGFNEPGTSFEEETHVVDLQESTIEANSRFFTSIEDVPKQAISMGIASIMKSKMIVLLAFGQEKADAIKGMVFGPITEDLPASILQKHDHVIVIVDEAAASQLD</sequence>
<reference key="1">
    <citation type="journal article" date="2008" name="J. Bacteriol.">
        <title>Genome sequence of a nephritogenic and highly transformable M49 strain of Streptococcus pyogenes.</title>
        <authorList>
            <person name="McShan W.M."/>
            <person name="Ferretti J.J."/>
            <person name="Karasawa T."/>
            <person name="Suvorov A.N."/>
            <person name="Lin S."/>
            <person name="Qin B."/>
            <person name="Jia H."/>
            <person name="Kenton S."/>
            <person name="Najar F."/>
            <person name="Wu H."/>
            <person name="Scott J."/>
            <person name="Roe B.A."/>
            <person name="Savic D.J."/>
        </authorList>
    </citation>
    <scope>NUCLEOTIDE SEQUENCE [LARGE SCALE GENOMIC DNA]</scope>
    <source>
        <strain>NZ131</strain>
    </source>
</reference>
<dbReference type="EC" id="3.5.99.6" evidence="1"/>
<dbReference type="EMBL" id="CP000829">
    <property type="protein sequence ID" value="ACI61407.1"/>
    <property type="molecule type" value="Genomic_DNA"/>
</dbReference>
<dbReference type="SMR" id="B5XM45"/>
<dbReference type="KEGG" id="soz:Spy49_1115c"/>
<dbReference type="HOGENOM" id="CLU_049611_1_0_9"/>
<dbReference type="UniPathway" id="UPA00629">
    <property type="reaction ID" value="UER00684"/>
</dbReference>
<dbReference type="Proteomes" id="UP000001039">
    <property type="component" value="Chromosome"/>
</dbReference>
<dbReference type="GO" id="GO:0005737">
    <property type="term" value="C:cytoplasm"/>
    <property type="evidence" value="ECO:0007669"/>
    <property type="project" value="TreeGrafter"/>
</dbReference>
<dbReference type="GO" id="GO:0004342">
    <property type="term" value="F:glucosamine-6-phosphate deaminase activity"/>
    <property type="evidence" value="ECO:0007669"/>
    <property type="project" value="UniProtKB-UniRule"/>
</dbReference>
<dbReference type="GO" id="GO:0042802">
    <property type="term" value="F:identical protein binding"/>
    <property type="evidence" value="ECO:0007669"/>
    <property type="project" value="TreeGrafter"/>
</dbReference>
<dbReference type="GO" id="GO:0005975">
    <property type="term" value="P:carbohydrate metabolic process"/>
    <property type="evidence" value="ECO:0007669"/>
    <property type="project" value="InterPro"/>
</dbReference>
<dbReference type="GO" id="GO:0006043">
    <property type="term" value="P:glucosamine catabolic process"/>
    <property type="evidence" value="ECO:0007669"/>
    <property type="project" value="TreeGrafter"/>
</dbReference>
<dbReference type="GO" id="GO:0006046">
    <property type="term" value="P:N-acetylglucosamine catabolic process"/>
    <property type="evidence" value="ECO:0007669"/>
    <property type="project" value="TreeGrafter"/>
</dbReference>
<dbReference type="GO" id="GO:0019262">
    <property type="term" value="P:N-acetylneuraminate catabolic process"/>
    <property type="evidence" value="ECO:0007669"/>
    <property type="project" value="UniProtKB-UniRule"/>
</dbReference>
<dbReference type="CDD" id="cd01399">
    <property type="entry name" value="GlcN6P_deaminase"/>
    <property type="match status" value="1"/>
</dbReference>
<dbReference type="FunFam" id="3.40.50.1360:FF:000003">
    <property type="entry name" value="Glucosamine-6-phosphate deaminase"/>
    <property type="match status" value="1"/>
</dbReference>
<dbReference type="Gene3D" id="3.40.50.1360">
    <property type="match status" value="1"/>
</dbReference>
<dbReference type="HAMAP" id="MF_01241">
    <property type="entry name" value="GlcN6P_deamin"/>
    <property type="match status" value="1"/>
</dbReference>
<dbReference type="InterPro" id="IPR006148">
    <property type="entry name" value="Glc/Gal-6P_isomerase"/>
</dbReference>
<dbReference type="InterPro" id="IPR004547">
    <property type="entry name" value="Glucosamine6P_isomerase"/>
</dbReference>
<dbReference type="InterPro" id="IPR018321">
    <property type="entry name" value="Glucosamine6P_isomerase_CS"/>
</dbReference>
<dbReference type="InterPro" id="IPR037171">
    <property type="entry name" value="NagB/RpiA_transferase-like"/>
</dbReference>
<dbReference type="NCBIfam" id="TIGR00502">
    <property type="entry name" value="nagB"/>
    <property type="match status" value="1"/>
</dbReference>
<dbReference type="PANTHER" id="PTHR11280">
    <property type="entry name" value="GLUCOSAMINE-6-PHOSPHATE ISOMERASE"/>
    <property type="match status" value="1"/>
</dbReference>
<dbReference type="PANTHER" id="PTHR11280:SF5">
    <property type="entry name" value="GLUCOSAMINE-6-PHOSPHATE ISOMERASE"/>
    <property type="match status" value="1"/>
</dbReference>
<dbReference type="Pfam" id="PF01182">
    <property type="entry name" value="Glucosamine_iso"/>
    <property type="match status" value="1"/>
</dbReference>
<dbReference type="SUPFAM" id="SSF100950">
    <property type="entry name" value="NagB/RpiA/CoA transferase-like"/>
    <property type="match status" value="1"/>
</dbReference>
<dbReference type="PROSITE" id="PS01161">
    <property type="entry name" value="GLC_GALNAC_ISOMERASE"/>
    <property type="match status" value="1"/>
</dbReference>
<feature type="chain" id="PRO_1000139797" description="Glucosamine-6-phosphate deaminase">
    <location>
        <begin position="1"/>
        <end position="234"/>
    </location>
</feature>
<feature type="active site" description="Proton acceptor; for enolization step" evidence="1">
    <location>
        <position position="62"/>
    </location>
</feature>
<feature type="active site" description="For ring-opening step" evidence="1">
    <location>
        <position position="128"/>
    </location>
</feature>
<feature type="active site" description="Proton acceptor; for ring-opening step" evidence="1">
    <location>
        <position position="130"/>
    </location>
</feature>
<feature type="active site" description="For ring-opening step" evidence="1">
    <location>
        <position position="135"/>
    </location>
</feature>
<evidence type="ECO:0000255" key="1">
    <source>
        <dbReference type="HAMAP-Rule" id="MF_01241"/>
    </source>
</evidence>
<protein>
    <recommendedName>
        <fullName evidence="1">Glucosamine-6-phosphate deaminase</fullName>
        <ecNumber evidence="1">3.5.99.6</ecNumber>
    </recommendedName>
    <alternativeName>
        <fullName evidence="1">GlcN6P deaminase</fullName>
        <shortName evidence="1">GNPDA</shortName>
    </alternativeName>
    <alternativeName>
        <fullName evidence="1">Glucosamine-6-phosphate isomerase</fullName>
    </alternativeName>
</protein>
<organism>
    <name type="scientific">Streptococcus pyogenes serotype M49 (strain NZ131)</name>
    <dbReference type="NCBI Taxonomy" id="471876"/>
    <lineage>
        <taxon>Bacteria</taxon>
        <taxon>Bacillati</taxon>
        <taxon>Bacillota</taxon>
        <taxon>Bacilli</taxon>
        <taxon>Lactobacillales</taxon>
        <taxon>Streptococcaceae</taxon>
        <taxon>Streptococcus</taxon>
    </lineage>
</organism>
<gene>
    <name evidence="1" type="primary">nagB</name>
    <name type="ordered locus">Spy49_1115c</name>
</gene>
<accession>B5XM45</accession>
<name>NAGB_STRPZ</name>
<proteinExistence type="inferred from homology"/>